<comment type="function">
    <text evidence="1">Aspartyl-tRNA synthetase with relaxed tRNA specificity since it is able to aspartylate not only its cognate tRNA(Asp) but also tRNA(Asn). Reaction proceeds in two steps: L-aspartate is first activated by ATP to form Asp-AMP and then transferred to the acceptor end of tRNA(Asp/Asn).</text>
</comment>
<comment type="catalytic activity">
    <reaction evidence="1">
        <text>tRNA(Asx) + L-aspartate + ATP = L-aspartyl-tRNA(Asx) + AMP + diphosphate</text>
        <dbReference type="Rhea" id="RHEA:18349"/>
        <dbReference type="Rhea" id="RHEA-COMP:9710"/>
        <dbReference type="Rhea" id="RHEA-COMP:9711"/>
        <dbReference type="ChEBI" id="CHEBI:29991"/>
        <dbReference type="ChEBI" id="CHEBI:30616"/>
        <dbReference type="ChEBI" id="CHEBI:33019"/>
        <dbReference type="ChEBI" id="CHEBI:78442"/>
        <dbReference type="ChEBI" id="CHEBI:78516"/>
        <dbReference type="ChEBI" id="CHEBI:456215"/>
        <dbReference type="EC" id="6.1.1.23"/>
    </reaction>
</comment>
<comment type="subunit">
    <text evidence="1">Homodimer.</text>
</comment>
<comment type="subcellular location">
    <subcellularLocation>
        <location evidence="1">Cytoplasm</location>
    </subcellularLocation>
</comment>
<comment type="similarity">
    <text evidence="1">Belongs to the class-II aminoacyl-tRNA synthetase family. Type 1 subfamily.</text>
</comment>
<feature type="chain" id="PRO_1000091032" description="Aspartate--tRNA(Asp/Asn) ligase">
    <location>
        <begin position="1"/>
        <end position="591"/>
    </location>
</feature>
<feature type="region of interest" description="Aspartate" evidence="1">
    <location>
        <begin position="199"/>
        <end position="202"/>
    </location>
</feature>
<feature type="binding site" evidence="1">
    <location>
        <position position="175"/>
    </location>
    <ligand>
        <name>L-aspartate</name>
        <dbReference type="ChEBI" id="CHEBI:29991"/>
    </ligand>
</feature>
<feature type="binding site" evidence="1">
    <location>
        <begin position="221"/>
        <end position="223"/>
    </location>
    <ligand>
        <name>ATP</name>
        <dbReference type="ChEBI" id="CHEBI:30616"/>
    </ligand>
</feature>
<feature type="binding site" evidence="1">
    <location>
        <position position="221"/>
    </location>
    <ligand>
        <name>L-aspartate</name>
        <dbReference type="ChEBI" id="CHEBI:29991"/>
    </ligand>
</feature>
<feature type="binding site" evidence="1">
    <location>
        <position position="450"/>
    </location>
    <ligand>
        <name>L-aspartate</name>
        <dbReference type="ChEBI" id="CHEBI:29991"/>
    </ligand>
</feature>
<feature type="binding site" evidence="1">
    <location>
        <position position="484"/>
    </location>
    <ligand>
        <name>ATP</name>
        <dbReference type="ChEBI" id="CHEBI:30616"/>
    </ligand>
</feature>
<feature type="binding site" evidence="1">
    <location>
        <position position="491"/>
    </location>
    <ligand>
        <name>L-aspartate</name>
        <dbReference type="ChEBI" id="CHEBI:29991"/>
    </ligand>
</feature>
<feature type="binding site" evidence="1">
    <location>
        <begin position="536"/>
        <end position="539"/>
    </location>
    <ligand>
        <name>ATP</name>
        <dbReference type="ChEBI" id="CHEBI:30616"/>
    </ligand>
</feature>
<feature type="site" description="Important for tRNA non-discrimination" evidence="1">
    <location>
        <position position="33"/>
    </location>
</feature>
<feature type="site" description="Important for tRNA non-discrimination" evidence="1">
    <location>
        <position position="83"/>
    </location>
</feature>
<sequence>MHRYRTHTCGALRDSHIDQTVRLSGWCHRIRDHGGVLFIDLRDHYGLTQCVADPDSPAFKDAEKLRAEWVVRIDGKVRRRPEGTDNPDLPTGAVEVFVTEIEVLGPAGELPLPVFGEQEYPEDVRLRYRFLDLRREKLHQNIMTRGAIVDSMRRRMKEQGFFEFQTPILTASSPEGARDFLVPSRIHPGKFYALPQAPQQYKQLLMMSGFDRYFQIAPCFRDEDPRADRLPGEFYQLDVEMSFVTQDDIFAAMEPVITGVFEEFAKGKRVTKGWPRIAFADSMRKYGTDKPDLRNPIEMQDVSEHFRGSGFKVFARMLEEQRNQVWAIPGPGGGSRAFCDRMNSWAQGEGQPGLGYIMWREGGEGAGPLANNIGPERTEAIRTALGLKAGDAAFFVAGDPSKFVKFAGLARTKVGEELNLIDKDQFALAWVVDFPMYEYNEDDKKVDFSHNPFSMPQGGMEALTSQDPLTIKAFQYDITCNGYEIASGGIRNHRPEAMVKAFEIAGYGEQEVVDRFGGMYRAFQYGAPPHGGMAAGVDRIVMLLCGTTNLREISLFPMNQRAEDLLMGAPSEVSPKQLRELHIRLNLPDTK</sequence>
<dbReference type="EC" id="6.1.1.23" evidence="1"/>
<dbReference type="EMBL" id="CP001096">
    <property type="protein sequence ID" value="ACF01954.1"/>
    <property type="molecule type" value="Genomic_DNA"/>
</dbReference>
<dbReference type="RefSeq" id="WP_012496510.1">
    <property type="nucleotide sequence ID" value="NC_011004.1"/>
</dbReference>
<dbReference type="SMR" id="B3Q9Q1"/>
<dbReference type="KEGG" id="rpt:Rpal_3453"/>
<dbReference type="HOGENOM" id="CLU_014330_3_2_5"/>
<dbReference type="OrthoDB" id="9802326at2"/>
<dbReference type="Proteomes" id="UP000001725">
    <property type="component" value="Chromosome"/>
</dbReference>
<dbReference type="GO" id="GO:0005737">
    <property type="term" value="C:cytoplasm"/>
    <property type="evidence" value="ECO:0007669"/>
    <property type="project" value="UniProtKB-SubCell"/>
</dbReference>
<dbReference type="GO" id="GO:0004815">
    <property type="term" value="F:aspartate-tRNA ligase activity"/>
    <property type="evidence" value="ECO:0007669"/>
    <property type="project" value="UniProtKB-UniRule"/>
</dbReference>
<dbReference type="GO" id="GO:0050560">
    <property type="term" value="F:aspartate-tRNA(Asn) ligase activity"/>
    <property type="evidence" value="ECO:0007669"/>
    <property type="project" value="UniProtKB-EC"/>
</dbReference>
<dbReference type="GO" id="GO:0005524">
    <property type="term" value="F:ATP binding"/>
    <property type="evidence" value="ECO:0007669"/>
    <property type="project" value="UniProtKB-UniRule"/>
</dbReference>
<dbReference type="GO" id="GO:0003676">
    <property type="term" value="F:nucleic acid binding"/>
    <property type="evidence" value="ECO:0007669"/>
    <property type="project" value="InterPro"/>
</dbReference>
<dbReference type="GO" id="GO:0006422">
    <property type="term" value="P:aspartyl-tRNA aminoacylation"/>
    <property type="evidence" value="ECO:0007669"/>
    <property type="project" value="UniProtKB-UniRule"/>
</dbReference>
<dbReference type="CDD" id="cd00777">
    <property type="entry name" value="AspRS_core"/>
    <property type="match status" value="1"/>
</dbReference>
<dbReference type="CDD" id="cd04317">
    <property type="entry name" value="EcAspRS_like_N"/>
    <property type="match status" value="1"/>
</dbReference>
<dbReference type="Gene3D" id="3.30.930.10">
    <property type="entry name" value="Bira Bifunctional Protein, Domain 2"/>
    <property type="match status" value="1"/>
</dbReference>
<dbReference type="Gene3D" id="3.30.1360.30">
    <property type="entry name" value="GAD-like domain"/>
    <property type="match status" value="1"/>
</dbReference>
<dbReference type="Gene3D" id="2.40.50.140">
    <property type="entry name" value="Nucleic acid-binding proteins"/>
    <property type="match status" value="1"/>
</dbReference>
<dbReference type="HAMAP" id="MF_00044">
    <property type="entry name" value="Asp_tRNA_synth_type1"/>
    <property type="match status" value="1"/>
</dbReference>
<dbReference type="InterPro" id="IPR004364">
    <property type="entry name" value="Aa-tRNA-synt_II"/>
</dbReference>
<dbReference type="InterPro" id="IPR006195">
    <property type="entry name" value="aa-tRNA-synth_II"/>
</dbReference>
<dbReference type="InterPro" id="IPR045864">
    <property type="entry name" value="aa-tRNA-synth_II/BPL/LPL"/>
</dbReference>
<dbReference type="InterPro" id="IPR004524">
    <property type="entry name" value="Asp-tRNA-ligase_1"/>
</dbReference>
<dbReference type="InterPro" id="IPR047089">
    <property type="entry name" value="Asp-tRNA-ligase_1_N"/>
</dbReference>
<dbReference type="InterPro" id="IPR002312">
    <property type="entry name" value="Asp/Asn-tRNA-synth_IIb"/>
</dbReference>
<dbReference type="InterPro" id="IPR047090">
    <property type="entry name" value="AspRS_core"/>
</dbReference>
<dbReference type="InterPro" id="IPR004115">
    <property type="entry name" value="GAD-like_sf"/>
</dbReference>
<dbReference type="InterPro" id="IPR029351">
    <property type="entry name" value="GAD_dom"/>
</dbReference>
<dbReference type="InterPro" id="IPR012340">
    <property type="entry name" value="NA-bd_OB-fold"/>
</dbReference>
<dbReference type="InterPro" id="IPR004365">
    <property type="entry name" value="NA-bd_OB_tRNA"/>
</dbReference>
<dbReference type="NCBIfam" id="TIGR00459">
    <property type="entry name" value="aspS_bact"/>
    <property type="match status" value="1"/>
</dbReference>
<dbReference type="NCBIfam" id="NF001750">
    <property type="entry name" value="PRK00476.1"/>
    <property type="match status" value="1"/>
</dbReference>
<dbReference type="PANTHER" id="PTHR22594:SF5">
    <property type="entry name" value="ASPARTATE--TRNA LIGASE, MITOCHONDRIAL"/>
    <property type="match status" value="1"/>
</dbReference>
<dbReference type="PANTHER" id="PTHR22594">
    <property type="entry name" value="ASPARTYL/LYSYL-TRNA SYNTHETASE"/>
    <property type="match status" value="1"/>
</dbReference>
<dbReference type="Pfam" id="PF02938">
    <property type="entry name" value="GAD"/>
    <property type="match status" value="1"/>
</dbReference>
<dbReference type="Pfam" id="PF00152">
    <property type="entry name" value="tRNA-synt_2"/>
    <property type="match status" value="1"/>
</dbReference>
<dbReference type="Pfam" id="PF01336">
    <property type="entry name" value="tRNA_anti-codon"/>
    <property type="match status" value="1"/>
</dbReference>
<dbReference type="PRINTS" id="PR01042">
    <property type="entry name" value="TRNASYNTHASP"/>
</dbReference>
<dbReference type="SUPFAM" id="SSF55681">
    <property type="entry name" value="Class II aaRS and biotin synthetases"/>
    <property type="match status" value="1"/>
</dbReference>
<dbReference type="SUPFAM" id="SSF55261">
    <property type="entry name" value="GAD domain-like"/>
    <property type="match status" value="1"/>
</dbReference>
<dbReference type="SUPFAM" id="SSF50249">
    <property type="entry name" value="Nucleic acid-binding proteins"/>
    <property type="match status" value="1"/>
</dbReference>
<dbReference type="PROSITE" id="PS50862">
    <property type="entry name" value="AA_TRNA_LIGASE_II"/>
    <property type="match status" value="1"/>
</dbReference>
<protein>
    <recommendedName>
        <fullName evidence="1">Aspartate--tRNA(Asp/Asn) ligase</fullName>
        <ecNumber evidence="1">6.1.1.23</ecNumber>
    </recommendedName>
    <alternativeName>
        <fullName evidence="1">Aspartyl-tRNA synthetase</fullName>
        <shortName evidence="1">AspRS</shortName>
    </alternativeName>
    <alternativeName>
        <fullName evidence="1">Non-discriminating aspartyl-tRNA synthetase</fullName>
        <shortName evidence="1">ND-AspRS</shortName>
    </alternativeName>
</protein>
<reference key="1">
    <citation type="submission" date="2008-05" db="EMBL/GenBank/DDBJ databases">
        <title>Complete sequence of Rhodopseudomonas palustris TIE-1.</title>
        <authorList>
            <consortium name="US DOE Joint Genome Institute"/>
            <person name="Lucas S."/>
            <person name="Copeland A."/>
            <person name="Lapidus A."/>
            <person name="Glavina del Rio T."/>
            <person name="Dalin E."/>
            <person name="Tice H."/>
            <person name="Pitluck S."/>
            <person name="Chain P."/>
            <person name="Malfatti S."/>
            <person name="Shin M."/>
            <person name="Vergez L."/>
            <person name="Lang D."/>
            <person name="Schmutz J."/>
            <person name="Larimer F."/>
            <person name="Land M."/>
            <person name="Hauser L."/>
            <person name="Kyrpides N."/>
            <person name="Mikhailova N."/>
            <person name="Emerson D."/>
            <person name="Newman D.K."/>
            <person name="Roden E."/>
            <person name="Richardson P."/>
        </authorList>
    </citation>
    <scope>NUCLEOTIDE SEQUENCE [LARGE SCALE GENOMIC DNA]</scope>
    <source>
        <strain>TIE-1</strain>
    </source>
</reference>
<proteinExistence type="inferred from homology"/>
<gene>
    <name evidence="1" type="primary">aspS</name>
    <name type="ordered locus">Rpal_3453</name>
</gene>
<keyword id="KW-0030">Aminoacyl-tRNA synthetase</keyword>
<keyword id="KW-0067">ATP-binding</keyword>
<keyword id="KW-0963">Cytoplasm</keyword>
<keyword id="KW-0436">Ligase</keyword>
<keyword id="KW-0547">Nucleotide-binding</keyword>
<keyword id="KW-0648">Protein biosynthesis</keyword>
<name>SYDND_RHOPT</name>
<evidence type="ECO:0000255" key="1">
    <source>
        <dbReference type="HAMAP-Rule" id="MF_00044"/>
    </source>
</evidence>
<accession>B3Q9Q1</accession>
<organism>
    <name type="scientific">Rhodopseudomonas palustris (strain TIE-1)</name>
    <dbReference type="NCBI Taxonomy" id="395960"/>
    <lineage>
        <taxon>Bacteria</taxon>
        <taxon>Pseudomonadati</taxon>
        <taxon>Pseudomonadota</taxon>
        <taxon>Alphaproteobacteria</taxon>
        <taxon>Hyphomicrobiales</taxon>
        <taxon>Nitrobacteraceae</taxon>
        <taxon>Rhodopseudomonas</taxon>
    </lineage>
</organism>